<comment type="function">
    <text evidence="1">Specifically methylates the N4 position of cytidine in position 1402 (C1402) of 16S rRNA.</text>
</comment>
<comment type="catalytic activity">
    <reaction evidence="1">
        <text>cytidine(1402) in 16S rRNA + S-adenosyl-L-methionine = N(4)-methylcytidine(1402) in 16S rRNA + S-adenosyl-L-homocysteine + H(+)</text>
        <dbReference type="Rhea" id="RHEA:42928"/>
        <dbReference type="Rhea" id="RHEA-COMP:10286"/>
        <dbReference type="Rhea" id="RHEA-COMP:10287"/>
        <dbReference type="ChEBI" id="CHEBI:15378"/>
        <dbReference type="ChEBI" id="CHEBI:57856"/>
        <dbReference type="ChEBI" id="CHEBI:59789"/>
        <dbReference type="ChEBI" id="CHEBI:74506"/>
        <dbReference type="ChEBI" id="CHEBI:82748"/>
        <dbReference type="EC" id="2.1.1.199"/>
    </reaction>
</comment>
<comment type="subcellular location">
    <subcellularLocation>
        <location evidence="1">Cytoplasm</location>
    </subcellularLocation>
</comment>
<comment type="similarity">
    <text evidence="1">Belongs to the methyltransferase superfamily. RsmH family.</text>
</comment>
<accession>P62474</accession>
<sequence>MKHSATSSEAHARATWPLPEPTLAYFPNARFVPSDRDLDAGAARPIRGGVAVVDDSPDFGHVPVLLERCVELLTPALTRRHPDGSGAVLLDATLGAGGHAERFLADLPGLRLIALDRDPSALEIARERLARFADRITLVHMRYDGIAAALTESGYAATESVDGILFDLGVSSMQLDRPERGFAYAQDAPLDMRMDPGSPLTAADILNTYDEAELADILHRYGEERFARRIAAQIVRRRAKEPFTSTADLVSLLYQAIPAPARRTGGHPAKRTFQALRIAVNDELDTLRRALPAALDALAVDGRIVVLAYQSLEDRIVKRLFAQAVASRTPVDLPVELPGHEPRFRALTHGAGRADAAEIERNPRSAAVRLRALQRTQAPQATGKGD</sequence>
<name>RSMH_MYCPA</name>
<protein>
    <recommendedName>
        <fullName evidence="1">Ribosomal RNA small subunit methyltransferase H</fullName>
        <ecNumber evidence="1">2.1.1.199</ecNumber>
    </recommendedName>
    <alternativeName>
        <fullName evidence="1">16S rRNA m(4)C1402 methyltransferase</fullName>
    </alternativeName>
    <alternativeName>
        <fullName evidence="1">rRNA (cytosine-N(4)-)-methyltransferase RsmH</fullName>
    </alternativeName>
</protein>
<keyword id="KW-0963">Cytoplasm</keyword>
<keyword id="KW-0489">Methyltransferase</keyword>
<keyword id="KW-1185">Reference proteome</keyword>
<keyword id="KW-0698">rRNA processing</keyword>
<keyword id="KW-0949">S-adenosyl-L-methionine</keyword>
<keyword id="KW-0808">Transferase</keyword>
<reference key="1">
    <citation type="journal article" date="2005" name="Proc. Natl. Acad. Sci. U.S.A.">
        <title>The complete genome sequence of Mycobacterium avium subspecies paratuberculosis.</title>
        <authorList>
            <person name="Li L."/>
            <person name="Bannantine J.P."/>
            <person name="Zhang Q."/>
            <person name="Amonsin A."/>
            <person name="May B.J."/>
            <person name="Alt D."/>
            <person name="Banerji N."/>
            <person name="Kanjilal S."/>
            <person name="Kapur V."/>
        </authorList>
    </citation>
    <scope>NUCLEOTIDE SEQUENCE [LARGE SCALE GENOMIC DNA]</scope>
    <source>
        <strain>ATCC BAA-968 / K-10</strain>
    </source>
</reference>
<feature type="chain" id="PRO_0000108663" description="Ribosomal RNA small subunit methyltransferase H">
    <location>
        <begin position="1"/>
        <end position="386"/>
    </location>
</feature>
<feature type="binding site" evidence="1">
    <location>
        <begin position="97"/>
        <end position="99"/>
    </location>
    <ligand>
        <name>S-adenosyl-L-methionine</name>
        <dbReference type="ChEBI" id="CHEBI:59789"/>
    </ligand>
</feature>
<feature type="binding site" evidence="1">
    <location>
        <position position="116"/>
    </location>
    <ligand>
        <name>S-adenosyl-L-methionine</name>
        <dbReference type="ChEBI" id="CHEBI:59789"/>
    </ligand>
</feature>
<feature type="binding site" evidence="1">
    <location>
        <position position="143"/>
    </location>
    <ligand>
        <name>S-adenosyl-L-methionine</name>
        <dbReference type="ChEBI" id="CHEBI:59789"/>
    </ligand>
</feature>
<feature type="binding site" evidence="1">
    <location>
        <position position="167"/>
    </location>
    <ligand>
        <name>S-adenosyl-L-methionine</name>
        <dbReference type="ChEBI" id="CHEBI:59789"/>
    </ligand>
</feature>
<feature type="binding site" evidence="1">
    <location>
        <position position="174"/>
    </location>
    <ligand>
        <name>S-adenosyl-L-methionine</name>
        <dbReference type="ChEBI" id="CHEBI:59789"/>
    </ligand>
</feature>
<evidence type="ECO:0000255" key="1">
    <source>
        <dbReference type="HAMAP-Rule" id="MF_01007"/>
    </source>
</evidence>
<dbReference type="EC" id="2.1.1.199" evidence="1"/>
<dbReference type="EMBL" id="AE016958">
    <property type="protein sequence ID" value="AAS04222.1"/>
    <property type="molecule type" value="Genomic_DNA"/>
</dbReference>
<dbReference type="SMR" id="P62474"/>
<dbReference type="STRING" id="262316.MAP_1905c"/>
<dbReference type="KEGG" id="mpa:MAP_1905c"/>
<dbReference type="eggNOG" id="COG0275">
    <property type="taxonomic scope" value="Bacteria"/>
</dbReference>
<dbReference type="HOGENOM" id="CLU_038422_0_0_11"/>
<dbReference type="Proteomes" id="UP000000580">
    <property type="component" value="Chromosome"/>
</dbReference>
<dbReference type="GO" id="GO:0005737">
    <property type="term" value="C:cytoplasm"/>
    <property type="evidence" value="ECO:0007669"/>
    <property type="project" value="UniProtKB-SubCell"/>
</dbReference>
<dbReference type="GO" id="GO:0071424">
    <property type="term" value="F:rRNA (cytosine-N4-)-methyltransferase activity"/>
    <property type="evidence" value="ECO:0007669"/>
    <property type="project" value="UniProtKB-UniRule"/>
</dbReference>
<dbReference type="GO" id="GO:0070475">
    <property type="term" value="P:rRNA base methylation"/>
    <property type="evidence" value="ECO:0007669"/>
    <property type="project" value="UniProtKB-UniRule"/>
</dbReference>
<dbReference type="FunFam" id="1.10.150.170:FF:000001">
    <property type="entry name" value="Ribosomal RNA small subunit methyltransferase H"/>
    <property type="match status" value="1"/>
</dbReference>
<dbReference type="Gene3D" id="1.10.150.170">
    <property type="entry name" value="Putative methyltransferase TM0872, insert domain"/>
    <property type="match status" value="1"/>
</dbReference>
<dbReference type="Gene3D" id="3.40.50.150">
    <property type="entry name" value="Vaccinia Virus protein VP39"/>
    <property type="match status" value="1"/>
</dbReference>
<dbReference type="HAMAP" id="MF_01007">
    <property type="entry name" value="16SrRNA_methyltr_H"/>
    <property type="match status" value="1"/>
</dbReference>
<dbReference type="InterPro" id="IPR002903">
    <property type="entry name" value="RsmH"/>
</dbReference>
<dbReference type="InterPro" id="IPR023397">
    <property type="entry name" value="SAM-dep_MeTrfase_MraW_recog"/>
</dbReference>
<dbReference type="InterPro" id="IPR029063">
    <property type="entry name" value="SAM-dependent_MTases_sf"/>
</dbReference>
<dbReference type="NCBIfam" id="TIGR00006">
    <property type="entry name" value="16S rRNA (cytosine(1402)-N(4))-methyltransferase RsmH"/>
    <property type="match status" value="1"/>
</dbReference>
<dbReference type="PANTHER" id="PTHR11265:SF0">
    <property type="entry name" value="12S RRNA N4-METHYLCYTIDINE METHYLTRANSFERASE"/>
    <property type="match status" value="1"/>
</dbReference>
<dbReference type="PANTHER" id="PTHR11265">
    <property type="entry name" value="S-ADENOSYL-METHYLTRANSFERASE MRAW"/>
    <property type="match status" value="1"/>
</dbReference>
<dbReference type="Pfam" id="PF01795">
    <property type="entry name" value="Methyltransf_5"/>
    <property type="match status" value="1"/>
</dbReference>
<dbReference type="SUPFAM" id="SSF81799">
    <property type="entry name" value="Putative methyltransferase TM0872, insert domain"/>
    <property type="match status" value="1"/>
</dbReference>
<dbReference type="SUPFAM" id="SSF53335">
    <property type="entry name" value="S-adenosyl-L-methionine-dependent methyltransferases"/>
    <property type="match status" value="1"/>
</dbReference>
<proteinExistence type="inferred from homology"/>
<organism>
    <name type="scientific">Mycolicibacterium paratuberculosis (strain ATCC BAA-968 / K-10)</name>
    <name type="common">Mycobacterium paratuberculosis</name>
    <dbReference type="NCBI Taxonomy" id="262316"/>
    <lineage>
        <taxon>Bacteria</taxon>
        <taxon>Bacillati</taxon>
        <taxon>Actinomycetota</taxon>
        <taxon>Actinomycetes</taxon>
        <taxon>Mycobacteriales</taxon>
        <taxon>Mycobacteriaceae</taxon>
        <taxon>Mycobacterium</taxon>
        <taxon>Mycobacterium avium complex (MAC)</taxon>
    </lineage>
</organism>
<gene>
    <name evidence="1" type="primary">rsmH</name>
    <name type="synonym">mraW</name>
    <name type="ordered locus">MAP_1905c</name>
</gene>